<accession>B5FPL0</accession>
<feature type="chain" id="PRO_0000359051" description="Acetyl-coenzyme A carboxylase carboxyl transferase subunit beta">
    <location>
        <begin position="1"/>
        <end position="304"/>
    </location>
</feature>
<feature type="domain" description="CoA carboxyltransferase N-terminal" evidence="2">
    <location>
        <begin position="23"/>
        <end position="292"/>
    </location>
</feature>
<feature type="zinc finger region" description="C4-type" evidence="1">
    <location>
        <begin position="27"/>
        <end position="49"/>
    </location>
</feature>
<feature type="region of interest" description="Disordered" evidence="3">
    <location>
        <begin position="283"/>
        <end position="304"/>
    </location>
</feature>
<feature type="binding site" evidence="1">
    <location>
        <position position="27"/>
    </location>
    <ligand>
        <name>Zn(2+)</name>
        <dbReference type="ChEBI" id="CHEBI:29105"/>
    </ligand>
</feature>
<feature type="binding site" evidence="1">
    <location>
        <position position="30"/>
    </location>
    <ligand>
        <name>Zn(2+)</name>
        <dbReference type="ChEBI" id="CHEBI:29105"/>
    </ligand>
</feature>
<feature type="binding site" evidence="1">
    <location>
        <position position="46"/>
    </location>
    <ligand>
        <name>Zn(2+)</name>
        <dbReference type="ChEBI" id="CHEBI:29105"/>
    </ligand>
</feature>
<feature type="binding site" evidence="1">
    <location>
        <position position="49"/>
    </location>
    <ligand>
        <name>Zn(2+)</name>
        <dbReference type="ChEBI" id="CHEBI:29105"/>
    </ligand>
</feature>
<sequence length="304" mass="33216">MSWIERIKSNITPTRKASIPEGVWTKCDSCGQVLYRAELERNLEVCPKCDHHMRMSARNRLHSLLDEGSLVELGSELEPKDVLKFRDSKKYKDRLASAQKETGEKDALVVMKGTLHGMPVVAAAFEFAFMGGSMGSVVGARFVRAVEQALEDNCPLVCFSASGGARMQEALMSLMQMAKTSAALAKMQERGLPYISVLTDPTMGGVSASFAMLGDLNIAEPKALIGFAGPRVIEQTVREKLPPGFQRSEFLIEKGAIDMIVRRPEMRLKLASILAKLMNLPAPNPDAPREGVVVPPAPDQESEA</sequence>
<gene>
    <name evidence="1" type="primary">accD</name>
    <name type="ordered locus">SeD_A2717</name>
</gene>
<organism>
    <name type="scientific">Salmonella dublin (strain CT_02021853)</name>
    <dbReference type="NCBI Taxonomy" id="439851"/>
    <lineage>
        <taxon>Bacteria</taxon>
        <taxon>Pseudomonadati</taxon>
        <taxon>Pseudomonadota</taxon>
        <taxon>Gammaproteobacteria</taxon>
        <taxon>Enterobacterales</taxon>
        <taxon>Enterobacteriaceae</taxon>
        <taxon>Salmonella</taxon>
    </lineage>
</organism>
<name>ACCD_SALDC</name>
<comment type="function">
    <text evidence="1">Component of the acetyl coenzyme A carboxylase (ACC) complex. Biotin carboxylase (BC) catalyzes the carboxylation of biotin on its carrier protein (BCCP) and then the CO(2) group is transferred by the transcarboxylase to acetyl-CoA to form malonyl-CoA.</text>
</comment>
<comment type="catalytic activity">
    <reaction evidence="1">
        <text>N(6)-carboxybiotinyl-L-lysyl-[protein] + acetyl-CoA = N(6)-biotinyl-L-lysyl-[protein] + malonyl-CoA</text>
        <dbReference type="Rhea" id="RHEA:54728"/>
        <dbReference type="Rhea" id="RHEA-COMP:10505"/>
        <dbReference type="Rhea" id="RHEA-COMP:10506"/>
        <dbReference type="ChEBI" id="CHEBI:57288"/>
        <dbReference type="ChEBI" id="CHEBI:57384"/>
        <dbReference type="ChEBI" id="CHEBI:83144"/>
        <dbReference type="ChEBI" id="CHEBI:83145"/>
        <dbReference type="EC" id="2.1.3.15"/>
    </reaction>
</comment>
<comment type="cofactor">
    <cofactor evidence="1">
        <name>Zn(2+)</name>
        <dbReference type="ChEBI" id="CHEBI:29105"/>
    </cofactor>
    <text evidence="1">Binds 1 zinc ion per subunit.</text>
</comment>
<comment type="pathway">
    <text evidence="1">Lipid metabolism; malonyl-CoA biosynthesis; malonyl-CoA from acetyl-CoA: step 1/1.</text>
</comment>
<comment type="subunit">
    <text evidence="1">Acetyl-CoA carboxylase is a heterohexamer composed of biotin carboxyl carrier protein (AccB), biotin carboxylase (AccC) and two subunits each of ACCase subunit alpha (AccA) and ACCase subunit beta (AccD).</text>
</comment>
<comment type="subcellular location">
    <subcellularLocation>
        <location evidence="1">Cytoplasm</location>
    </subcellularLocation>
</comment>
<comment type="similarity">
    <text evidence="1">Belongs to the AccD/PCCB family.</text>
</comment>
<dbReference type="EC" id="2.1.3.15" evidence="1"/>
<dbReference type="EMBL" id="CP001144">
    <property type="protein sequence ID" value="ACH76860.1"/>
    <property type="molecule type" value="Genomic_DNA"/>
</dbReference>
<dbReference type="RefSeq" id="WP_000118383.1">
    <property type="nucleotide sequence ID" value="NC_011205.1"/>
</dbReference>
<dbReference type="SMR" id="B5FPL0"/>
<dbReference type="KEGG" id="sed:SeD_A2717"/>
<dbReference type="HOGENOM" id="CLU_015486_1_0_6"/>
<dbReference type="UniPathway" id="UPA00655">
    <property type="reaction ID" value="UER00711"/>
</dbReference>
<dbReference type="Proteomes" id="UP000008322">
    <property type="component" value="Chromosome"/>
</dbReference>
<dbReference type="GO" id="GO:0009329">
    <property type="term" value="C:acetate CoA-transferase complex"/>
    <property type="evidence" value="ECO:0007669"/>
    <property type="project" value="TreeGrafter"/>
</dbReference>
<dbReference type="GO" id="GO:0003989">
    <property type="term" value="F:acetyl-CoA carboxylase activity"/>
    <property type="evidence" value="ECO:0007669"/>
    <property type="project" value="InterPro"/>
</dbReference>
<dbReference type="GO" id="GO:0005524">
    <property type="term" value="F:ATP binding"/>
    <property type="evidence" value="ECO:0007669"/>
    <property type="project" value="UniProtKB-KW"/>
</dbReference>
<dbReference type="GO" id="GO:0016743">
    <property type="term" value="F:carboxyl- or carbamoyltransferase activity"/>
    <property type="evidence" value="ECO:0007669"/>
    <property type="project" value="UniProtKB-UniRule"/>
</dbReference>
<dbReference type="GO" id="GO:0008270">
    <property type="term" value="F:zinc ion binding"/>
    <property type="evidence" value="ECO:0007669"/>
    <property type="project" value="UniProtKB-UniRule"/>
</dbReference>
<dbReference type="GO" id="GO:0006633">
    <property type="term" value="P:fatty acid biosynthetic process"/>
    <property type="evidence" value="ECO:0007669"/>
    <property type="project" value="UniProtKB-KW"/>
</dbReference>
<dbReference type="GO" id="GO:2001295">
    <property type="term" value="P:malonyl-CoA biosynthetic process"/>
    <property type="evidence" value="ECO:0007669"/>
    <property type="project" value="UniProtKB-UniRule"/>
</dbReference>
<dbReference type="FunFam" id="3.90.226.10:FF:000013">
    <property type="entry name" value="Acetyl-coenzyme A carboxylase carboxyl transferase subunit beta"/>
    <property type="match status" value="1"/>
</dbReference>
<dbReference type="Gene3D" id="3.90.226.10">
    <property type="entry name" value="2-enoyl-CoA Hydratase, Chain A, domain 1"/>
    <property type="match status" value="1"/>
</dbReference>
<dbReference type="HAMAP" id="MF_01395">
    <property type="entry name" value="AcetylCoA_CT_beta"/>
    <property type="match status" value="1"/>
</dbReference>
<dbReference type="InterPro" id="IPR034733">
    <property type="entry name" value="AcCoA_carboxyl_beta"/>
</dbReference>
<dbReference type="InterPro" id="IPR000438">
    <property type="entry name" value="Acetyl_CoA_COase_Trfase_b_su"/>
</dbReference>
<dbReference type="InterPro" id="IPR029045">
    <property type="entry name" value="ClpP/crotonase-like_dom_sf"/>
</dbReference>
<dbReference type="InterPro" id="IPR011762">
    <property type="entry name" value="COA_CT_N"/>
</dbReference>
<dbReference type="InterPro" id="IPR041010">
    <property type="entry name" value="Znf-ACC"/>
</dbReference>
<dbReference type="NCBIfam" id="TIGR00515">
    <property type="entry name" value="accD"/>
    <property type="match status" value="1"/>
</dbReference>
<dbReference type="PANTHER" id="PTHR42995">
    <property type="entry name" value="ACETYL-COENZYME A CARBOXYLASE CARBOXYL TRANSFERASE SUBUNIT BETA, CHLOROPLASTIC"/>
    <property type="match status" value="1"/>
</dbReference>
<dbReference type="PANTHER" id="PTHR42995:SF5">
    <property type="entry name" value="ACETYL-COENZYME A CARBOXYLASE CARBOXYL TRANSFERASE SUBUNIT BETA, CHLOROPLASTIC"/>
    <property type="match status" value="1"/>
</dbReference>
<dbReference type="Pfam" id="PF01039">
    <property type="entry name" value="Carboxyl_trans"/>
    <property type="match status" value="1"/>
</dbReference>
<dbReference type="Pfam" id="PF17848">
    <property type="entry name" value="Zn_ribbon_ACC"/>
    <property type="match status" value="1"/>
</dbReference>
<dbReference type="PRINTS" id="PR01070">
    <property type="entry name" value="ACCCTRFRASEB"/>
</dbReference>
<dbReference type="SUPFAM" id="SSF52096">
    <property type="entry name" value="ClpP/crotonase"/>
    <property type="match status" value="1"/>
</dbReference>
<dbReference type="PROSITE" id="PS50980">
    <property type="entry name" value="COA_CT_NTER"/>
    <property type="match status" value="1"/>
</dbReference>
<proteinExistence type="inferred from homology"/>
<protein>
    <recommendedName>
        <fullName evidence="1">Acetyl-coenzyme A carboxylase carboxyl transferase subunit beta</fullName>
        <shortName evidence="1">ACCase subunit beta</shortName>
        <shortName evidence="1">Acetyl-CoA carboxylase carboxyltransferase subunit beta</shortName>
        <ecNumber evidence="1">2.1.3.15</ecNumber>
    </recommendedName>
</protein>
<evidence type="ECO:0000255" key="1">
    <source>
        <dbReference type="HAMAP-Rule" id="MF_01395"/>
    </source>
</evidence>
<evidence type="ECO:0000255" key="2">
    <source>
        <dbReference type="PROSITE-ProRule" id="PRU01136"/>
    </source>
</evidence>
<evidence type="ECO:0000256" key="3">
    <source>
        <dbReference type="SAM" id="MobiDB-lite"/>
    </source>
</evidence>
<reference key="1">
    <citation type="journal article" date="2011" name="J. Bacteriol.">
        <title>Comparative genomics of 28 Salmonella enterica isolates: evidence for CRISPR-mediated adaptive sublineage evolution.</title>
        <authorList>
            <person name="Fricke W.F."/>
            <person name="Mammel M.K."/>
            <person name="McDermott P.F."/>
            <person name="Tartera C."/>
            <person name="White D.G."/>
            <person name="Leclerc J.E."/>
            <person name="Ravel J."/>
            <person name="Cebula T.A."/>
        </authorList>
    </citation>
    <scope>NUCLEOTIDE SEQUENCE [LARGE SCALE GENOMIC DNA]</scope>
    <source>
        <strain>CT_02021853</strain>
    </source>
</reference>
<keyword id="KW-0067">ATP-binding</keyword>
<keyword id="KW-0963">Cytoplasm</keyword>
<keyword id="KW-0275">Fatty acid biosynthesis</keyword>
<keyword id="KW-0276">Fatty acid metabolism</keyword>
<keyword id="KW-0444">Lipid biosynthesis</keyword>
<keyword id="KW-0443">Lipid metabolism</keyword>
<keyword id="KW-0479">Metal-binding</keyword>
<keyword id="KW-0547">Nucleotide-binding</keyword>
<keyword id="KW-0808">Transferase</keyword>
<keyword id="KW-0862">Zinc</keyword>
<keyword id="KW-0863">Zinc-finger</keyword>